<sequence>MIGLLIGGVLGLVLSAAGTPLFIRFLVKRGYGQFVRDDGPTTHKTKRGTPTMGGAVIIGSLVLAYLITHGLLAVLGVDFGGPTASGLILLLLTVGMAFVGFVDDFTKITKQRSLGLTPRGKIILQALIGTAFAVLALNFPDERGLTPASTAISFARDIPWLDLAFAGPAIGVILFVIWSNLITTATTNAVNLTDGLDGLATGATAMITGAYVLISLFQSSQSCALEGTRGCYEVRDPMDLALLAAILTGSLLGFLWWNTSPAKIFMGDTGSLGLGGALAGFAIFTRTEILVAVLAGLMVAITLSVIIQVGWFKVSGGKRVFLMAPLQHHFELKGWAEVTVVVRFWLLSLMCVTVGLAIFYGDWLIRQGGLAGVTP</sequence>
<feature type="chain" id="PRO_1000202073" description="Phospho-N-acetylmuramoyl-pentapeptide-transferase">
    <location>
        <begin position="1"/>
        <end position="375"/>
    </location>
</feature>
<feature type="transmembrane region" description="Helical" evidence="1">
    <location>
        <begin position="2"/>
        <end position="22"/>
    </location>
</feature>
<feature type="transmembrane region" description="Helical" evidence="1">
    <location>
        <begin position="55"/>
        <end position="75"/>
    </location>
</feature>
<feature type="transmembrane region" description="Helical" evidence="1">
    <location>
        <begin position="82"/>
        <end position="102"/>
    </location>
</feature>
<feature type="transmembrane region" description="Helical" evidence="1">
    <location>
        <begin position="120"/>
        <end position="140"/>
    </location>
</feature>
<feature type="transmembrane region" description="Helical" evidence="1">
    <location>
        <begin position="158"/>
        <end position="178"/>
    </location>
</feature>
<feature type="transmembrane region" description="Helical" evidence="1">
    <location>
        <begin position="198"/>
        <end position="218"/>
    </location>
</feature>
<feature type="transmembrane region" description="Helical" evidence="1">
    <location>
        <begin position="237"/>
        <end position="257"/>
    </location>
</feature>
<feature type="transmembrane region" description="Helical" evidence="1">
    <location>
        <begin position="264"/>
        <end position="284"/>
    </location>
</feature>
<feature type="transmembrane region" description="Helical" evidence="1">
    <location>
        <begin position="289"/>
        <end position="309"/>
    </location>
</feature>
<feature type="transmembrane region" description="Helical" evidence="1">
    <location>
        <begin position="345"/>
        <end position="365"/>
    </location>
</feature>
<accession>C5CA33</accession>
<dbReference type="EC" id="2.7.8.13" evidence="1"/>
<dbReference type="EMBL" id="CP001628">
    <property type="protein sequence ID" value="ACS30868.1"/>
    <property type="molecule type" value="Genomic_DNA"/>
</dbReference>
<dbReference type="RefSeq" id="WP_012750918.1">
    <property type="nucleotide sequence ID" value="NC_012803.1"/>
</dbReference>
<dbReference type="SMR" id="C5CA33"/>
<dbReference type="STRING" id="465515.Mlut_13630"/>
<dbReference type="EnsemblBacteria" id="ACS30868">
    <property type="protein sequence ID" value="ACS30868"/>
    <property type="gene ID" value="Mlut_13630"/>
</dbReference>
<dbReference type="GeneID" id="93343245"/>
<dbReference type="KEGG" id="mlu:Mlut_13630"/>
<dbReference type="PATRIC" id="fig|465515.4.peg.1305"/>
<dbReference type="eggNOG" id="COG0472">
    <property type="taxonomic scope" value="Bacteria"/>
</dbReference>
<dbReference type="HOGENOM" id="CLU_023982_0_1_11"/>
<dbReference type="UniPathway" id="UPA00219"/>
<dbReference type="Proteomes" id="UP000000738">
    <property type="component" value="Chromosome"/>
</dbReference>
<dbReference type="GO" id="GO:0005886">
    <property type="term" value="C:plasma membrane"/>
    <property type="evidence" value="ECO:0007669"/>
    <property type="project" value="UniProtKB-SubCell"/>
</dbReference>
<dbReference type="GO" id="GO:0046872">
    <property type="term" value="F:metal ion binding"/>
    <property type="evidence" value="ECO:0007669"/>
    <property type="project" value="UniProtKB-KW"/>
</dbReference>
<dbReference type="GO" id="GO:0008963">
    <property type="term" value="F:phospho-N-acetylmuramoyl-pentapeptide-transferase activity"/>
    <property type="evidence" value="ECO:0007669"/>
    <property type="project" value="UniProtKB-UniRule"/>
</dbReference>
<dbReference type="GO" id="GO:0051992">
    <property type="term" value="F:UDP-N-acetylmuramoyl-L-alanyl-D-glutamyl-meso-2,6-diaminopimelyl-D-alanyl-D-alanine:undecaprenyl-phosphate transferase activity"/>
    <property type="evidence" value="ECO:0007669"/>
    <property type="project" value="RHEA"/>
</dbReference>
<dbReference type="GO" id="GO:0051301">
    <property type="term" value="P:cell division"/>
    <property type="evidence" value="ECO:0007669"/>
    <property type="project" value="UniProtKB-KW"/>
</dbReference>
<dbReference type="GO" id="GO:0071555">
    <property type="term" value="P:cell wall organization"/>
    <property type="evidence" value="ECO:0007669"/>
    <property type="project" value="UniProtKB-KW"/>
</dbReference>
<dbReference type="GO" id="GO:0009252">
    <property type="term" value="P:peptidoglycan biosynthetic process"/>
    <property type="evidence" value="ECO:0007669"/>
    <property type="project" value="UniProtKB-UniRule"/>
</dbReference>
<dbReference type="GO" id="GO:0008360">
    <property type="term" value="P:regulation of cell shape"/>
    <property type="evidence" value="ECO:0007669"/>
    <property type="project" value="UniProtKB-KW"/>
</dbReference>
<dbReference type="CDD" id="cd06852">
    <property type="entry name" value="GT_MraY"/>
    <property type="match status" value="1"/>
</dbReference>
<dbReference type="HAMAP" id="MF_00038">
    <property type="entry name" value="MraY"/>
    <property type="match status" value="1"/>
</dbReference>
<dbReference type="InterPro" id="IPR000715">
    <property type="entry name" value="Glycosyl_transferase_4"/>
</dbReference>
<dbReference type="InterPro" id="IPR003524">
    <property type="entry name" value="PNAcMuramoyl-5peptid_Trfase"/>
</dbReference>
<dbReference type="InterPro" id="IPR018480">
    <property type="entry name" value="PNAcMuramoyl-5peptid_Trfase_CS"/>
</dbReference>
<dbReference type="NCBIfam" id="TIGR00445">
    <property type="entry name" value="mraY"/>
    <property type="match status" value="1"/>
</dbReference>
<dbReference type="PANTHER" id="PTHR22926">
    <property type="entry name" value="PHOSPHO-N-ACETYLMURAMOYL-PENTAPEPTIDE-TRANSFERASE"/>
    <property type="match status" value="1"/>
</dbReference>
<dbReference type="PANTHER" id="PTHR22926:SF5">
    <property type="entry name" value="PHOSPHO-N-ACETYLMURAMOYL-PENTAPEPTIDE-TRANSFERASE HOMOLOG"/>
    <property type="match status" value="1"/>
</dbReference>
<dbReference type="Pfam" id="PF00953">
    <property type="entry name" value="Glycos_transf_4"/>
    <property type="match status" value="1"/>
</dbReference>
<dbReference type="Pfam" id="PF10555">
    <property type="entry name" value="MraY_sig1"/>
    <property type="match status" value="1"/>
</dbReference>
<dbReference type="PROSITE" id="PS01347">
    <property type="entry name" value="MRAY_1"/>
    <property type="match status" value="1"/>
</dbReference>
<dbReference type="PROSITE" id="PS01348">
    <property type="entry name" value="MRAY_2"/>
    <property type="match status" value="1"/>
</dbReference>
<protein>
    <recommendedName>
        <fullName evidence="1">Phospho-N-acetylmuramoyl-pentapeptide-transferase</fullName>
        <ecNumber evidence="1">2.7.8.13</ecNumber>
    </recommendedName>
    <alternativeName>
        <fullName evidence="1">UDP-MurNAc-pentapeptide phosphotransferase</fullName>
    </alternativeName>
</protein>
<proteinExistence type="inferred from homology"/>
<keyword id="KW-0131">Cell cycle</keyword>
<keyword id="KW-0132">Cell division</keyword>
<keyword id="KW-1003">Cell membrane</keyword>
<keyword id="KW-0133">Cell shape</keyword>
<keyword id="KW-0961">Cell wall biogenesis/degradation</keyword>
<keyword id="KW-0460">Magnesium</keyword>
<keyword id="KW-0472">Membrane</keyword>
<keyword id="KW-0479">Metal-binding</keyword>
<keyword id="KW-0573">Peptidoglycan synthesis</keyword>
<keyword id="KW-1185">Reference proteome</keyword>
<keyword id="KW-0808">Transferase</keyword>
<keyword id="KW-0812">Transmembrane</keyword>
<keyword id="KW-1133">Transmembrane helix</keyword>
<evidence type="ECO:0000255" key="1">
    <source>
        <dbReference type="HAMAP-Rule" id="MF_00038"/>
    </source>
</evidence>
<name>MRAY_MICLC</name>
<organism>
    <name type="scientific">Micrococcus luteus (strain ATCC 4698 / DSM 20030 / JCM 1464 / CCM 169 / CCUG 5858 / IAM 1056 / NBRC 3333 / NCIMB 9278 / NCTC 2665 / VKM Ac-2230)</name>
    <name type="common">Micrococcus lysodeikticus</name>
    <dbReference type="NCBI Taxonomy" id="465515"/>
    <lineage>
        <taxon>Bacteria</taxon>
        <taxon>Bacillati</taxon>
        <taxon>Actinomycetota</taxon>
        <taxon>Actinomycetes</taxon>
        <taxon>Micrococcales</taxon>
        <taxon>Micrococcaceae</taxon>
        <taxon>Micrococcus</taxon>
    </lineage>
</organism>
<gene>
    <name evidence="1" type="primary">mraY</name>
    <name type="ordered locus">Mlut_13630</name>
</gene>
<reference key="1">
    <citation type="journal article" date="2010" name="J. Bacteriol.">
        <title>Genome sequence of the Fleming strain of Micrococcus luteus, a simple free-living actinobacterium.</title>
        <authorList>
            <person name="Young M."/>
            <person name="Artsatbanov V."/>
            <person name="Beller H.R."/>
            <person name="Chandra G."/>
            <person name="Chater K.F."/>
            <person name="Dover L.G."/>
            <person name="Goh E.B."/>
            <person name="Kahan T."/>
            <person name="Kaprelyants A.S."/>
            <person name="Kyrpides N."/>
            <person name="Lapidus A."/>
            <person name="Lowry S.R."/>
            <person name="Lykidis A."/>
            <person name="Mahillon J."/>
            <person name="Markowitz V."/>
            <person name="Mavromatis K."/>
            <person name="Mukamolova G.V."/>
            <person name="Oren A."/>
            <person name="Rokem J.S."/>
            <person name="Smith M.C."/>
            <person name="Young D.I."/>
            <person name="Greenblatt C.L."/>
        </authorList>
    </citation>
    <scope>NUCLEOTIDE SEQUENCE [LARGE SCALE GENOMIC DNA]</scope>
    <source>
        <strain>ATCC 4698 / DSM 20030 / JCM 1464 / CCM 169 / CCUG 5858 / IAM 1056 / NBRC 3333 / NCIMB 9278 / NCTC 2665 / VKM Ac-2230</strain>
    </source>
</reference>
<comment type="function">
    <text evidence="1">Catalyzes the initial step of the lipid cycle reactions in the biosynthesis of the cell wall peptidoglycan: transfers peptidoglycan precursor phospho-MurNAc-pentapeptide from UDP-MurNAc-pentapeptide onto the lipid carrier undecaprenyl phosphate, yielding undecaprenyl-pyrophosphoryl-MurNAc-pentapeptide, known as lipid I.</text>
</comment>
<comment type="catalytic activity">
    <reaction evidence="1">
        <text>UDP-N-acetyl-alpha-D-muramoyl-L-alanyl-gamma-D-glutamyl-meso-2,6-diaminopimeloyl-D-alanyl-D-alanine + di-trans,octa-cis-undecaprenyl phosphate = di-trans,octa-cis-undecaprenyl diphospho-N-acetyl-alpha-D-muramoyl-L-alanyl-D-glutamyl-meso-2,6-diaminopimeloyl-D-alanyl-D-alanine + UMP</text>
        <dbReference type="Rhea" id="RHEA:28386"/>
        <dbReference type="ChEBI" id="CHEBI:57865"/>
        <dbReference type="ChEBI" id="CHEBI:60392"/>
        <dbReference type="ChEBI" id="CHEBI:61386"/>
        <dbReference type="ChEBI" id="CHEBI:61387"/>
        <dbReference type="EC" id="2.7.8.13"/>
    </reaction>
</comment>
<comment type="cofactor">
    <cofactor evidence="1">
        <name>Mg(2+)</name>
        <dbReference type="ChEBI" id="CHEBI:18420"/>
    </cofactor>
</comment>
<comment type="pathway">
    <text evidence="1">Cell wall biogenesis; peptidoglycan biosynthesis.</text>
</comment>
<comment type="subcellular location">
    <subcellularLocation>
        <location evidence="1">Cell membrane</location>
        <topology evidence="1">Multi-pass membrane protein</topology>
    </subcellularLocation>
</comment>
<comment type="similarity">
    <text evidence="1">Belongs to the glycosyltransferase 4 family. MraY subfamily.</text>
</comment>